<dbReference type="EMBL" id="AF080249">
    <property type="protein sequence ID" value="AAC32191.1"/>
    <property type="status" value="ALT_FRAME"/>
    <property type="molecule type" value="mRNA"/>
</dbReference>
<dbReference type="EMBL" id="AF007270">
    <property type="protein sequence ID" value="AAB61066.1"/>
    <property type="status" value="ALT_SEQ"/>
    <property type="molecule type" value="Genomic_DNA"/>
</dbReference>
<dbReference type="EMBL" id="CP002688">
    <property type="protein sequence ID" value="AED93639.1"/>
    <property type="molecule type" value="Genomic_DNA"/>
</dbReference>
<dbReference type="PIR" id="T01775">
    <property type="entry name" value="T01775"/>
</dbReference>
<dbReference type="PIR" id="T51360">
    <property type="entry name" value="T51360"/>
</dbReference>
<dbReference type="RefSeq" id="NP_568491.1">
    <property type="nucleotide sequence ID" value="NM_122582.2"/>
</dbReference>
<dbReference type="SMR" id="O81635"/>
<dbReference type="BioGRID" id="18033">
    <property type="interactions" value="1"/>
</dbReference>
<dbReference type="FunCoup" id="O81635">
    <property type="interactions" value="161"/>
</dbReference>
<dbReference type="IntAct" id="O81635">
    <property type="interactions" value="1"/>
</dbReference>
<dbReference type="STRING" id="3702.O81635"/>
<dbReference type="iPTMnet" id="O81635"/>
<dbReference type="PaxDb" id="3702-AT5G27000.1"/>
<dbReference type="ProteomicsDB" id="237138"/>
<dbReference type="EnsemblPlants" id="AT5G27000.1">
    <property type="protein sequence ID" value="AT5G27000.1"/>
    <property type="gene ID" value="AT5G27000"/>
</dbReference>
<dbReference type="GeneID" id="832758"/>
<dbReference type="Gramene" id="AT5G27000.1">
    <property type="protein sequence ID" value="AT5G27000.1"/>
    <property type="gene ID" value="AT5G27000"/>
</dbReference>
<dbReference type="KEGG" id="ath:AT5G27000"/>
<dbReference type="Araport" id="AT5G27000"/>
<dbReference type="TAIR" id="AT5G27000">
    <property type="gene designation" value="ATK4"/>
</dbReference>
<dbReference type="eggNOG" id="KOG0239">
    <property type="taxonomic scope" value="Eukaryota"/>
</dbReference>
<dbReference type="HOGENOM" id="CLU_001485_8_0_1"/>
<dbReference type="InParanoid" id="O81635"/>
<dbReference type="OMA" id="FPKNRQP"/>
<dbReference type="PhylomeDB" id="O81635"/>
<dbReference type="PRO" id="PR:O81635"/>
<dbReference type="Proteomes" id="UP000006548">
    <property type="component" value="Chromosome 5"/>
</dbReference>
<dbReference type="ExpressionAtlas" id="O81635">
    <property type="expression patterns" value="baseline and differential"/>
</dbReference>
<dbReference type="GO" id="GO:0005737">
    <property type="term" value="C:cytoplasm"/>
    <property type="evidence" value="ECO:0007669"/>
    <property type="project" value="UniProtKB-KW"/>
</dbReference>
<dbReference type="GO" id="GO:0005874">
    <property type="term" value="C:microtubule"/>
    <property type="evidence" value="ECO:0007669"/>
    <property type="project" value="UniProtKB-KW"/>
</dbReference>
<dbReference type="GO" id="GO:0005524">
    <property type="term" value="F:ATP binding"/>
    <property type="evidence" value="ECO:0007669"/>
    <property type="project" value="UniProtKB-KW"/>
</dbReference>
<dbReference type="GO" id="GO:0016887">
    <property type="term" value="F:ATP hydrolysis activity"/>
    <property type="evidence" value="ECO:0000314"/>
    <property type="project" value="TAIR"/>
</dbReference>
<dbReference type="GO" id="GO:0008017">
    <property type="term" value="F:microtubule binding"/>
    <property type="evidence" value="ECO:0000314"/>
    <property type="project" value="TAIR"/>
</dbReference>
<dbReference type="GO" id="GO:0003777">
    <property type="term" value="F:microtubule motor activity"/>
    <property type="evidence" value="ECO:0007669"/>
    <property type="project" value="InterPro"/>
</dbReference>
<dbReference type="GO" id="GO:0007018">
    <property type="term" value="P:microtubule-based movement"/>
    <property type="evidence" value="ECO:0007669"/>
    <property type="project" value="InterPro"/>
</dbReference>
<dbReference type="CDD" id="cd21203">
    <property type="entry name" value="CH_AtKIN14-like"/>
    <property type="match status" value="1"/>
</dbReference>
<dbReference type="CDD" id="cd01366">
    <property type="entry name" value="KISc_C_terminal"/>
    <property type="match status" value="1"/>
</dbReference>
<dbReference type="FunFam" id="3.40.850.10:FF:000045">
    <property type="entry name" value="Kinesin-like protein KIN-14I isoform A"/>
    <property type="match status" value="1"/>
</dbReference>
<dbReference type="Gene3D" id="1.10.418.10">
    <property type="entry name" value="Calponin-like domain"/>
    <property type="match status" value="1"/>
</dbReference>
<dbReference type="Gene3D" id="3.40.850.10">
    <property type="entry name" value="Kinesin motor domain"/>
    <property type="match status" value="1"/>
</dbReference>
<dbReference type="InterPro" id="IPR001715">
    <property type="entry name" value="CH_dom"/>
</dbReference>
<dbReference type="InterPro" id="IPR036872">
    <property type="entry name" value="CH_dom_sf"/>
</dbReference>
<dbReference type="InterPro" id="IPR027640">
    <property type="entry name" value="Kinesin-like_fam"/>
</dbReference>
<dbReference type="InterPro" id="IPR019821">
    <property type="entry name" value="Kinesin_motor_CS"/>
</dbReference>
<dbReference type="InterPro" id="IPR001752">
    <property type="entry name" value="Kinesin_motor_dom"/>
</dbReference>
<dbReference type="InterPro" id="IPR036961">
    <property type="entry name" value="Kinesin_motor_dom_sf"/>
</dbReference>
<dbReference type="InterPro" id="IPR027417">
    <property type="entry name" value="P-loop_NTPase"/>
</dbReference>
<dbReference type="PANTHER" id="PTHR47972:SF29">
    <property type="entry name" value="KINESIN-LIKE PROTEIN KIN-14G"/>
    <property type="match status" value="1"/>
</dbReference>
<dbReference type="PANTHER" id="PTHR47972">
    <property type="entry name" value="KINESIN-LIKE PROTEIN KLP-3"/>
    <property type="match status" value="1"/>
</dbReference>
<dbReference type="Pfam" id="PF00307">
    <property type="entry name" value="CH"/>
    <property type="match status" value="1"/>
</dbReference>
<dbReference type="Pfam" id="PF00225">
    <property type="entry name" value="Kinesin"/>
    <property type="match status" value="1"/>
</dbReference>
<dbReference type="PRINTS" id="PR00380">
    <property type="entry name" value="KINESINHEAVY"/>
</dbReference>
<dbReference type="SMART" id="SM00033">
    <property type="entry name" value="CH"/>
    <property type="match status" value="1"/>
</dbReference>
<dbReference type="SMART" id="SM00129">
    <property type="entry name" value="KISc"/>
    <property type="match status" value="1"/>
</dbReference>
<dbReference type="SUPFAM" id="SSF47576">
    <property type="entry name" value="Calponin-homology domain, CH-domain"/>
    <property type="match status" value="1"/>
</dbReference>
<dbReference type="SUPFAM" id="SSF52540">
    <property type="entry name" value="P-loop containing nucleoside triphosphate hydrolases"/>
    <property type="match status" value="1"/>
</dbReference>
<dbReference type="PROSITE" id="PS50021">
    <property type="entry name" value="CH"/>
    <property type="match status" value="1"/>
</dbReference>
<dbReference type="PROSITE" id="PS00411">
    <property type="entry name" value="KINESIN_MOTOR_1"/>
    <property type="match status" value="1"/>
</dbReference>
<dbReference type="PROSITE" id="PS50067">
    <property type="entry name" value="KINESIN_MOTOR_2"/>
    <property type="match status" value="1"/>
</dbReference>
<keyword id="KW-0067">ATP-binding</keyword>
<keyword id="KW-0175">Coiled coil</keyword>
<keyword id="KW-0963">Cytoplasm</keyword>
<keyword id="KW-0206">Cytoskeleton</keyword>
<keyword id="KW-0493">Microtubule</keyword>
<keyword id="KW-0505">Motor protein</keyword>
<keyword id="KW-0547">Nucleotide-binding</keyword>
<keyword id="KW-1185">Reference proteome</keyword>
<name>KN14G_ARATH</name>
<organism>
    <name type="scientific">Arabidopsis thaliana</name>
    <name type="common">Mouse-ear cress</name>
    <dbReference type="NCBI Taxonomy" id="3702"/>
    <lineage>
        <taxon>Eukaryota</taxon>
        <taxon>Viridiplantae</taxon>
        <taxon>Streptophyta</taxon>
        <taxon>Embryophyta</taxon>
        <taxon>Tracheophyta</taxon>
        <taxon>Spermatophyta</taxon>
        <taxon>Magnoliopsida</taxon>
        <taxon>eudicotyledons</taxon>
        <taxon>Gunneridae</taxon>
        <taxon>Pentapetalae</taxon>
        <taxon>rosids</taxon>
        <taxon>malvids</taxon>
        <taxon>Brassicales</taxon>
        <taxon>Brassicaceae</taxon>
        <taxon>Camelineae</taxon>
        <taxon>Arabidopsis</taxon>
    </lineage>
</organism>
<gene>
    <name evidence="9" type="primary">KIN14G</name>
    <name evidence="9" type="synonym">ATK4</name>
    <name evidence="8 12" type="synonym">KATD</name>
    <name evidence="10" type="ordered locus">At5g27000</name>
    <name evidence="11" type="ORF">F2P16.12</name>
</gene>
<reference key="1">
    <citation type="journal article" date="1999" name="Gene">
        <title>Characterization of katD, a kinesin-like protein gene specifically expressed in floral tissues of Arabidopsis thaliana.</title>
        <authorList>
            <person name="Tamura K."/>
            <person name="Nakatani K."/>
            <person name="Mitsui H."/>
            <person name="Ohashi Y."/>
            <person name="Takahashi H."/>
        </authorList>
    </citation>
    <scope>NUCLEOTIDE SEQUENCE [MRNA]</scope>
    <scope>CHARACTERIZATION</scope>
    <scope>TISSUE SPECIFICITY</scope>
    <source>
        <strain>cv. Columbia</strain>
        <tissue>Flower</tissue>
    </source>
</reference>
<reference key="2">
    <citation type="journal article" date="2000" name="Nature">
        <title>Sequence and analysis of chromosome 5 of the plant Arabidopsis thaliana.</title>
        <authorList>
            <person name="Tabata S."/>
            <person name="Kaneko T."/>
            <person name="Nakamura Y."/>
            <person name="Kotani H."/>
            <person name="Kato T."/>
            <person name="Asamizu E."/>
            <person name="Miyajima N."/>
            <person name="Sasamoto S."/>
            <person name="Kimura T."/>
            <person name="Hosouchi T."/>
            <person name="Kawashima K."/>
            <person name="Kohara M."/>
            <person name="Matsumoto M."/>
            <person name="Matsuno A."/>
            <person name="Muraki A."/>
            <person name="Nakayama S."/>
            <person name="Nakazaki N."/>
            <person name="Naruo K."/>
            <person name="Okumura S."/>
            <person name="Shinpo S."/>
            <person name="Takeuchi C."/>
            <person name="Wada T."/>
            <person name="Watanabe A."/>
            <person name="Yamada M."/>
            <person name="Yasuda M."/>
            <person name="Sato S."/>
            <person name="de la Bastide M."/>
            <person name="Huang E."/>
            <person name="Spiegel L."/>
            <person name="Gnoj L."/>
            <person name="O'Shaughnessy A."/>
            <person name="Preston R."/>
            <person name="Habermann K."/>
            <person name="Murray J."/>
            <person name="Johnson D."/>
            <person name="Rohlfing T."/>
            <person name="Nelson J."/>
            <person name="Stoneking T."/>
            <person name="Pepin K."/>
            <person name="Spieth J."/>
            <person name="Sekhon M."/>
            <person name="Armstrong J."/>
            <person name="Becker M."/>
            <person name="Belter E."/>
            <person name="Cordum H."/>
            <person name="Cordes M."/>
            <person name="Courtney L."/>
            <person name="Courtney W."/>
            <person name="Dante M."/>
            <person name="Du H."/>
            <person name="Edwards J."/>
            <person name="Fryman J."/>
            <person name="Haakensen B."/>
            <person name="Lamar E."/>
            <person name="Latreille P."/>
            <person name="Leonard S."/>
            <person name="Meyer R."/>
            <person name="Mulvaney E."/>
            <person name="Ozersky P."/>
            <person name="Riley A."/>
            <person name="Strowmatt C."/>
            <person name="Wagner-McPherson C."/>
            <person name="Wollam A."/>
            <person name="Yoakum M."/>
            <person name="Bell M."/>
            <person name="Dedhia N."/>
            <person name="Parnell L."/>
            <person name="Shah R."/>
            <person name="Rodriguez M."/>
            <person name="Hoon See L."/>
            <person name="Vil D."/>
            <person name="Baker J."/>
            <person name="Kirchoff K."/>
            <person name="Toth K."/>
            <person name="King L."/>
            <person name="Bahret A."/>
            <person name="Miller B."/>
            <person name="Marra M.A."/>
            <person name="Martienssen R."/>
            <person name="McCombie W.R."/>
            <person name="Wilson R.K."/>
            <person name="Murphy G."/>
            <person name="Bancroft I."/>
            <person name="Volckaert G."/>
            <person name="Wambutt R."/>
            <person name="Duesterhoeft A."/>
            <person name="Stiekema W."/>
            <person name="Pohl T."/>
            <person name="Entian K.-D."/>
            <person name="Terryn N."/>
            <person name="Hartley N."/>
            <person name="Bent E."/>
            <person name="Johnson S."/>
            <person name="Langham S.-A."/>
            <person name="McCullagh B."/>
            <person name="Robben J."/>
            <person name="Grymonprez B."/>
            <person name="Zimmermann W."/>
            <person name="Ramsperger U."/>
            <person name="Wedler H."/>
            <person name="Balke K."/>
            <person name="Wedler E."/>
            <person name="Peters S."/>
            <person name="van Staveren M."/>
            <person name="Dirkse W."/>
            <person name="Mooijman P."/>
            <person name="Klein Lankhorst R."/>
            <person name="Weitzenegger T."/>
            <person name="Bothe G."/>
            <person name="Rose M."/>
            <person name="Hauf J."/>
            <person name="Berneiser S."/>
            <person name="Hempel S."/>
            <person name="Feldpausch M."/>
            <person name="Lamberth S."/>
            <person name="Villarroel R."/>
            <person name="Gielen J."/>
            <person name="Ardiles W."/>
            <person name="Bents O."/>
            <person name="Lemcke K."/>
            <person name="Kolesov G."/>
            <person name="Mayer K.F.X."/>
            <person name="Rudd S."/>
            <person name="Schoof H."/>
            <person name="Schueller C."/>
            <person name="Zaccaria P."/>
            <person name="Mewes H.-W."/>
            <person name="Bevan M."/>
            <person name="Fransz P.F."/>
        </authorList>
    </citation>
    <scope>NUCLEOTIDE SEQUENCE [LARGE SCALE GENOMIC DNA]</scope>
    <source>
        <strain>cv. Columbia</strain>
    </source>
</reference>
<reference key="3">
    <citation type="journal article" date="2017" name="Plant J.">
        <title>Araport11: a complete reannotation of the Arabidopsis thaliana reference genome.</title>
        <authorList>
            <person name="Cheng C.Y."/>
            <person name="Krishnakumar V."/>
            <person name="Chan A.P."/>
            <person name="Thibaud-Nissen F."/>
            <person name="Schobel S."/>
            <person name="Town C.D."/>
        </authorList>
    </citation>
    <scope>GENOME REANNOTATION</scope>
    <source>
        <strain>cv. Columbia</strain>
    </source>
</reference>
<reference key="4">
    <citation type="journal article" date="1993" name="Mol. Gen. Genet.">
        <title>Identification of a gene family (kat) encoding kinesin-like proteins in Arabidopsis thaliana and the characterization of secondary structure of KatA.</title>
        <authorList>
            <person name="Mitsui H."/>
            <person name="Yamaguchi-Shinozaki K."/>
            <person name="Shinozaki K."/>
            <person name="Nishikawa K."/>
            <person name="Takahashi H."/>
        </authorList>
    </citation>
    <scope>IDENTIFICATION</scope>
</reference>
<reference key="5">
    <citation type="journal article" date="2001" name="BMC Genomics">
        <title>Kinesins in the Arabidopsis genome: a comparative analysis among eukaryotes.</title>
        <authorList>
            <person name="Reddy A.S."/>
            <person name="Day I.S."/>
        </authorList>
    </citation>
    <scope>GENE FAMILY</scope>
</reference>
<reference key="6">
    <citation type="journal article" date="2006" name="BMC Genomics">
        <title>Comprehensive comparative analysis of kinesins in photosynthetic eukaryotes.</title>
        <authorList>
            <person name="Richardson D.N."/>
            <person name="Simmons M.P."/>
            <person name="Reddy A.S."/>
        </authorList>
    </citation>
    <scope>GENE FAMILY</scope>
    <scope>NOMENCLATURE</scope>
</reference>
<reference key="7">
    <citation type="journal article" date="2012" name="Protoplasma">
        <title>Functions of the Arabidopsis kinesin superfamily of microtubule-based motor proteins.</title>
        <authorList>
            <person name="Zhu C."/>
            <person name="Dixit R."/>
        </authorList>
    </citation>
    <scope>REVIEW</scope>
</reference>
<accession>O81635</accession>
<accession>O04641</accession>
<sequence length="987" mass="110009">MATTSEINNDLSFSVVSIVEDVLQQHSSRSSDVGLVSRKVEESSLRRYEAAGWLRDMIGVSNGKDFPGEPSEEEFRLGLRSGIVLCNVLNKVNPGSVSKVVEAPDDVADGAALSAFQYFENIRNFLVAIEEMGLPSFEASDMEKGGKSIRIVNCILALKSYSEWKLKGENGPWRYGSNMKHNFGSRKLFLRKSSEPFVSSISRTQSTDMLSTDQPLSSDGDSRSINGLVRSFIADRKHEDIPNVVESVLNKVMEEVQQRLSIHNEMMKSSSKPIPEDDSSCETVVRSQLCDARQHEEAEENSPPQVVEKKFQRTNFEHHEEQKILLNQQKHIQELKQTLYTTKAGMKLLQMKYQEDFFHLGKHLNGLAYAATGYKRVLEENRKLYNLVQDLKGNIRVYCRVRPFLPGQESGGLSAVEDIDEGTITIRVPSKYGKAGQKPFMFNKVFGPSATQEEVFSDMQPLVRSVLDGYNVCIFAYGQTGSGKTFTMTGPKELTEESLGVNYRALADLFLLSNQRKDTTSYEISVQMLEIYNEQVRDLLAQDGQTKRLEIRNNSHNGINVPEASLVPVSSTDDVIQLMDLGHMNRAVSSTAMNDRSSRSHSCVTVHVQGRDLTSGSILHGSMHLVDLAGSERVDKSEVTGDRLKEAQHINKSLSALGDVISSLSQKTSHVPYRNSKLTQLLQDSLGGSAKTLMFVHISPEPDTLGETISTLKFAERVGSVELGAARVNKDNSEVKELKEQIANLKMALVRKGNGNDVQPTAIPINRERISRRRSLETPTIRPKLPTMGNTSNNSRPQIMDLSGPEAFNDSTASSRRHSLDIHELMKSSSPAWPRQPLNGKDEDRESKSGEWIDKHEELIQNQNPNSPEQFYQSMVPQQQSLYGGKQDFEVQSITDNESDEAATSDCSDSDLLWRLSVQVNVPKVSNIQNSANPKPKKIQPRTAKLSETRSLIPSLIPAPSKRPPNTVNSQPQRPTRDGKRRLSLGT</sequence>
<comment type="function">
    <text>Microtubule-binding motor protein.</text>
</comment>
<comment type="subunit">
    <text evidence="9">Monomer.</text>
</comment>
<comment type="subcellular location">
    <subcellularLocation>
        <location evidence="9">Cytoplasm</location>
        <location evidence="9">Cytoskeleton</location>
    </subcellularLocation>
</comment>
<comment type="tissue specificity">
    <text evidence="5">Flower specific.</text>
</comment>
<comment type="similarity">
    <text evidence="7">Belongs to the TRAFAC class myosin-kinesin ATPase superfamily. Kinesin family. KIN-14 subfamily.</text>
</comment>
<comment type="sequence caution" evidence="9">
    <conflict type="erroneous gene model prediction">
        <sequence resource="EMBL-CDS" id="AAB61066"/>
    </conflict>
</comment>
<comment type="sequence caution" evidence="9">
    <conflict type="frameshift">
        <sequence resource="EMBL-CDS" id="AAC32191"/>
    </conflict>
</comment>
<proteinExistence type="evidence at protein level"/>
<protein>
    <recommendedName>
        <fullName evidence="9">Kinesin-like protein KIN-14G</fullName>
    </recommendedName>
    <alternativeName>
        <fullName evidence="6 8">Kinesin-like protein KatD</fullName>
    </alternativeName>
</protein>
<feature type="chain" id="PRO_0000125383" description="Kinesin-like protein KIN-14G">
    <location>
        <begin position="1"/>
        <end position="987"/>
    </location>
</feature>
<feature type="domain" description="Calponin-homology (CH)" evidence="2">
    <location>
        <begin position="44"/>
        <end position="163"/>
    </location>
</feature>
<feature type="domain" description="Kinesin motor" evidence="3">
    <location>
        <begin position="394"/>
        <end position="721"/>
    </location>
</feature>
<feature type="region of interest" description="Disordered" evidence="4">
    <location>
        <begin position="201"/>
        <end position="221"/>
    </location>
</feature>
<feature type="region of interest" description="Disordered" evidence="4">
    <location>
        <begin position="759"/>
        <end position="849"/>
    </location>
</feature>
<feature type="region of interest" description="Disordered" evidence="4">
    <location>
        <begin position="927"/>
        <end position="987"/>
    </location>
</feature>
<feature type="coiled-coil region" evidence="1">
    <location>
        <begin position="725"/>
        <end position="754"/>
    </location>
</feature>
<feature type="compositionally biased region" description="Polar residues" evidence="4">
    <location>
        <begin position="788"/>
        <end position="797"/>
    </location>
</feature>
<feature type="compositionally biased region" description="Basic and acidic residues" evidence="4">
    <location>
        <begin position="840"/>
        <end position="849"/>
    </location>
</feature>
<feature type="compositionally biased region" description="Polar residues" evidence="4">
    <location>
        <begin position="964"/>
        <end position="974"/>
    </location>
</feature>
<feature type="binding site" evidence="3">
    <location>
        <begin position="478"/>
        <end position="485"/>
    </location>
    <ligand>
        <name>ATP</name>
        <dbReference type="ChEBI" id="CHEBI:30616"/>
    </ligand>
</feature>
<evidence type="ECO:0000255" key="1"/>
<evidence type="ECO:0000255" key="2">
    <source>
        <dbReference type="PROSITE-ProRule" id="PRU00044"/>
    </source>
</evidence>
<evidence type="ECO:0000255" key="3">
    <source>
        <dbReference type="PROSITE-ProRule" id="PRU00283"/>
    </source>
</evidence>
<evidence type="ECO:0000256" key="4">
    <source>
        <dbReference type="SAM" id="MobiDB-lite"/>
    </source>
</evidence>
<evidence type="ECO:0000269" key="5">
    <source>
    </source>
</evidence>
<evidence type="ECO:0000303" key="6">
    <source>
    </source>
</evidence>
<evidence type="ECO:0000303" key="7">
    <source>
    </source>
</evidence>
<evidence type="ECO:0000303" key="8">
    <source>
    </source>
</evidence>
<evidence type="ECO:0000305" key="9"/>
<evidence type="ECO:0000312" key="10">
    <source>
        <dbReference type="Araport" id="AT5G27000"/>
    </source>
</evidence>
<evidence type="ECO:0000312" key="11">
    <source>
        <dbReference type="EMBL" id="AAB61066.1"/>
    </source>
</evidence>
<evidence type="ECO:0000312" key="12">
    <source>
        <dbReference type="EMBL" id="AAC32191.1"/>
    </source>
</evidence>